<proteinExistence type="inferred from homology"/>
<reference key="1">
    <citation type="journal article" date="2011" name="Stand. Genomic Sci.">
        <title>Complete genome sequence of the filamentous gliding predatory bacterium Herpetosiphon aurantiacus type strain (114-95(T)).</title>
        <authorList>
            <person name="Kiss H."/>
            <person name="Nett M."/>
            <person name="Domin N."/>
            <person name="Martin K."/>
            <person name="Maresca J.A."/>
            <person name="Copeland A."/>
            <person name="Lapidus A."/>
            <person name="Lucas S."/>
            <person name="Berry K.W."/>
            <person name="Glavina Del Rio T."/>
            <person name="Dalin E."/>
            <person name="Tice H."/>
            <person name="Pitluck S."/>
            <person name="Richardson P."/>
            <person name="Bruce D."/>
            <person name="Goodwin L."/>
            <person name="Han C."/>
            <person name="Detter J.C."/>
            <person name="Schmutz J."/>
            <person name="Brettin T."/>
            <person name="Land M."/>
            <person name="Hauser L."/>
            <person name="Kyrpides N.C."/>
            <person name="Ivanova N."/>
            <person name="Goeker M."/>
            <person name="Woyke T."/>
            <person name="Klenk H.P."/>
            <person name="Bryant D.A."/>
        </authorList>
    </citation>
    <scope>NUCLEOTIDE SEQUENCE [LARGE SCALE GENOMIC DNA]</scope>
    <source>
        <strain>ATCC 23779 / DSM 785 / 114-95</strain>
    </source>
</reference>
<accession>A9B5G8</accession>
<gene>
    <name evidence="1" type="primary">rplL</name>
    <name type="ordered locus">Haur_0141</name>
</gene>
<evidence type="ECO:0000255" key="1">
    <source>
        <dbReference type="HAMAP-Rule" id="MF_00368"/>
    </source>
</evidence>
<evidence type="ECO:0000305" key="2"/>
<sequence length="130" mass="13091">MASEKVTALLEELKGLTLVEAAELAKEMEEVFGVSAAAPVMVAGVAAAGDAPAAAAEEQTEFTVILKGAPADKKIAIIKAVREVVAGLGLKEAKDLVEGAPKPVKEGVSKEEAEAAKAALAAAGAEIEIK</sequence>
<name>RL7_HERA2</name>
<comment type="function">
    <text evidence="1">Forms part of the ribosomal stalk which helps the ribosome interact with GTP-bound translation factors. Is thus essential for accurate translation.</text>
</comment>
<comment type="subunit">
    <text evidence="1">Homodimer. Part of the ribosomal stalk of the 50S ribosomal subunit. Forms a multimeric L10(L12)X complex, where L10 forms an elongated spine to which 2 to 4 L12 dimers bind in a sequential fashion. Binds GTP-bound translation factors.</text>
</comment>
<comment type="similarity">
    <text evidence="1">Belongs to the bacterial ribosomal protein bL12 family.</text>
</comment>
<protein>
    <recommendedName>
        <fullName evidence="1">Large ribosomal subunit protein bL12</fullName>
    </recommendedName>
    <alternativeName>
        <fullName evidence="2">50S ribosomal protein L7/L12</fullName>
    </alternativeName>
</protein>
<feature type="chain" id="PRO_1000121448" description="Large ribosomal subunit protein bL12">
    <location>
        <begin position="1"/>
        <end position="130"/>
    </location>
</feature>
<keyword id="KW-0687">Ribonucleoprotein</keyword>
<keyword id="KW-0689">Ribosomal protein</keyword>
<organism>
    <name type="scientific">Herpetosiphon aurantiacus (strain ATCC 23779 / DSM 785 / 114-95)</name>
    <dbReference type="NCBI Taxonomy" id="316274"/>
    <lineage>
        <taxon>Bacteria</taxon>
        <taxon>Bacillati</taxon>
        <taxon>Chloroflexota</taxon>
        <taxon>Chloroflexia</taxon>
        <taxon>Herpetosiphonales</taxon>
        <taxon>Herpetosiphonaceae</taxon>
        <taxon>Herpetosiphon</taxon>
    </lineage>
</organism>
<dbReference type="EMBL" id="CP000875">
    <property type="protein sequence ID" value="ABX02793.1"/>
    <property type="molecule type" value="Genomic_DNA"/>
</dbReference>
<dbReference type="SMR" id="A9B5G8"/>
<dbReference type="FunCoup" id="A9B5G8">
    <property type="interactions" value="493"/>
</dbReference>
<dbReference type="STRING" id="316274.Haur_0141"/>
<dbReference type="KEGG" id="hau:Haur_0141"/>
<dbReference type="eggNOG" id="COG0222">
    <property type="taxonomic scope" value="Bacteria"/>
</dbReference>
<dbReference type="HOGENOM" id="CLU_086499_3_0_0"/>
<dbReference type="InParanoid" id="A9B5G8"/>
<dbReference type="Proteomes" id="UP000000787">
    <property type="component" value="Chromosome"/>
</dbReference>
<dbReference type="GO" id="GO:0022625">
    <property type="term" value="C:cytosolic large ribosomal subunit"/>
    <property type="evidence" value="ECO:0007669"/>
    <property type="project" value="TreeGrafter"/>
</dbReference>
<dbReference type="GO" id="GO:0003729">
    <property type="term" value="F:mRNA binding"/>
    <property type="evidence" value="ECO:0007669"/>
    <property type="project" value="TreeGrafter"/>
</dbReference>
<dbReference type="GO" id="GO:0003735">
    <property type="term" value="F:structural constituent of ribosome"/>
    <property type="evidence" value="ECO:0007669"/>
    <property type="project" value="InterPro"/>
</dbReference>
<dbReference type="GO" id="GO:0006412">
    <property type="term" value="P:translation"/>
    <property type="evidence" value="ECO:0007669"/>
    <property type="project" value="UniProtKB-UniRule"/>
</dbReference>
<dbReference type="CDD" id="cd00387">
    <property type="entry name" value="Ribosomal_L7_L12"/>
    <property type="match status" value="1"/>
</dbReference>
<dbReference type="FunFam" id="3.30.1390.10:FF:000001">
    <property type="entry name" value="50S ribosomal protein L7/L12"/>
    <property type="match status" value="1"/>
</dbReference>
<dbReference type="Gene3D" id="3.30.1390.10">
    <property type="match status" value="1"/>
</dbReference>
<dbReference type="Gene3D" id="1.20.5.710">
    <property type="entry name" value="Single helix bin"/>
    <property type="match status" value="1"/>
</dbReference>
<dbReference type="HAMAP" id="MF_00368">
    <property type="entry name" value="Ribosomal_bL12"/>
    <property type="match status" value="1"/>
</dbReference>
<dbReference type="InterPro" id="IPR000206">
    <property type="entry name" value="Ribosomal_bL12"/>
</dbReference>
<dbReference type="InterPro" id="IPR013823">
    <property type="entry name" value="Ribosomal_bL12_C"/>
</dbReference>
<dbReference type="InterPro" id="IPR014719">
    <property type="entry name" value="Ribosomal_bL12_C/ClpS-like"/>
</dbReference>
<dbReference type="InterPro" id="IPR008932">
    <property type="entry name" value="Ribosomal_bL12_oligo"/>
</dbReference>
<dbReference type="InterPro" id="IPR036235">
    <property type="entry name" value="Ribosomal_bL12_oligo_N_sf"/>
</dbReference>
<dbReference type="NCBIfam" id="TIGR00855">
    <property type="entry name" value="L12"/>
    <property type="match status" value="1"/>
</dbReference>
<dbReference type="PANTHER" id="PTHR45987">
    <property type="entry name" value="39S RIBOSOMAL PROTEIN L12"/>
    <property type="match status" value="1"/>
</dbReference>
<dbReference type="PANTHER" id="PTHR45987:SF4">
    <property type="entry name" value="LARGE RIBOSOMAL SUBUNIT PROTEIN BL12M"/>
    <property type="match status" value="1"/>
</dbReference>
<dbReference type="Pfam" id="PF00542">
    <property type="entry name" value="Ribosomal_L12"/>
    <property type="match status" value="1"/>
</dbReference>
<dbReference type="Pfam" id="PF16320">
    <property type="entry name" value="Ribosomal_L12_N"/>
    <property type="match status" value="1"/>
</dbReference>
<dbReference type="SUPFAM" id="SSF54736">
    <property type="entry name" value="ClpS-like"/>
    <property type="match status" value="1"/>
</dbReference>
<dbReference type="SUPFAM" id="SSF48300">
    <property type="entry name" value="Ribosomal protein L7/12, oligomerisation (N-terminal) domain"/>
    <property type="match status" value="1"/>
</dbReference>